<accession>A3MMR3</accession>
<name>RISB_BURM7</name>
<evidence type="ECO:0000255" key="1">
    <source>
        <dbReference type="HAMAP-Rule" id="MF_00178"/>
    </source>
</evidence>
<evidence type="ECO:0000256" key="2">
    <source>
        <dbReference type="SAM" id="MobiDB-lite"/>
    </source>
</evidence>
<sequence>MEIGQYQPNLEGDGLRIGIVQSRFNEPVCNGLADACVEELERLGVSGEDVLLVTVPGALEIPLALQKLAESNQFDALIALGAVIRGETYHFELVSNESGAGITRIALDFNTPIANAVLTTETDEQAIARMTEKGRDAARVAVEMANLTMTLDQLSDDEEDEEDEDDEDEEERA</sequence>
<keyword id="KW-0686">Riboflavin biosynthesis</keyword>
<keyword id="KW-0808">Transferase</keyword>
<gene>
    <name evidence="1" type="primary">ribH</name>
    <name type="ordered locus">BMA10247_2017</name>
</gene>
<reference key="1">
    <citation type="journal article" date="2010" name="Genome Biol. Evol.">
        <title>Continuing evolution of Burkholderia mallei through genome reduction and large-scale rearrangements.</title>
        <authorList>
            <person name="Losada L."/>
            <person name="Ronning C.M."/>
            <person name="DeShazer D."/>
            <person name="Woods D."/>
            <person name="Fedorova N."/>
            <person name="Kim H.S."/>
            <person name="Shabalina S.A."/>
            <person name="Pearson T.R."/>
            <person name="Brinkac L."/>
            <person name="Tan P."/>
            <person name="Nandi T."/>
            <person name="Crabtree J."/>
            <person name="Badger J."/>
            <person name="Beckstrom-Sternberg S."/>
            <person name="Saqib M."/>
            <person name="Schutzer S.E."/>
            <person name="Keim P."/>
            <person name="Nierman W.C."/>
        </authorList>
    </citation>
    <scope>NUCLEOTIDE SEQUENCE [LARGE SCALE GENOMIC DNA]</scope>
    <source>
        <strain>NCTC 10247</strain>
    </source>
</reference>
<organism>
    <name type="scientific">Burkholderia mallei (strain NCTC 10247)</name>
    <dbReference type="NCBI Taxonomy" id="320389"/>
    <lineage>
        <taxon>Bacteria</taxon>
        <taxon>Pseudomonadati</taxon>
        <taxon>Pseudomonadota</taxon>
        <taxon>Betaproteobacteria</taxon>
        <taxon>Burkholderiales</taxon>
        <taxon>Burkholderiaceae</taxon>
        <taxon>Burkholderia</taxon>
        <taxon>pseudomallei group</taxon>
    </lineage>
</organism>
<proteinExistence type="inferred from homology"/>
<dbReference type="EC" id="2.5.1.78" evidence="1"/>
<dbReference type="EMBL" id="CP000548">
    <property type="protein sequence ID" value="ABO06961.1"/>
    <property type="molecule type" value="Genomic_DNA"/>
</dbReference>
<dbReference type="RefSeq" id="WP_004186056.1">
    <property type="nucleotide sequence ID" value="NZ_CP007802.1"/>
</dbReference>
<dbReference type="SMR" id="A3MMR3"/>
<dbReference type="GeneID" id="93061204"/>
<dbReference type="KEGG" id="bmaz:BM44_1205"/>
<dbReference type="KEGG" id="bmn:BMA10247_2017"/>
<dbReference type="PATRIC" id="fig|320389.8.peg.1346"/>
<dbReference type="UniPathway" id="UPA00275">
    <property type="reaction ID" value="UER00404"/>
</dbReference>
<dbReference type="GO" id="GO:0005829">
    <property type="term" value="C:cytosol"/>
    <property type="evidence" value="ECO:0007669"/>
    <property type="project" value="TreeGrafter"/>
</dbReference>
<dbReference type="GO" id="GO:0009349">
    <property type="term" value="C:riboflavin synthase complex"/>
    <property type="evidence" value="ECO:0007669"/>
    <property type="project" value="InterPro"/>
</dbReference>
<dbReference type="GO" id="GO:0000906">
    <property type="term" value="F:6,7-dimethyl-8-ribityllumazine synthase activity"/>
    <property type="evidence" value="ECO:0007669"/>
    <property type="project" value="UniProtKB-UniRule"/>
</dbReference>
<dbReference type="GO" id="GO:0009231">
    <property type="term" value="P:riboflavin biosynthetic process"/>
    <property type="evidence" value="ECO:0007669"/>
    <property type="project" value="UniProtKB-UniRule"/>
</dbReference>
<dbReference type="CDD" id="cd09209">
    <property type="entry name" value="Lumazine_synthase-I"/>
    <property type="match status" value="1"/>
</dbReference>
<dbReference type="Gene3D" id="3.40.50.960">
    <property type="entry name" value="Lumazine/riboflavin synthase"/>
    <property type="match status" value="1"/>
</dbReference>
<dbReference type="HAMAP" id="MF_00178">
    <property type="entry name" value="Lumazine_synth"/>
    <property type="match status" value="1"/>
</dbReference>
<dbReference type="InterPro" id="IPR034964">
    <property type="entry name" value="LS"/>
</dbReference>
<dbReference type="InterPro" id="IPR002180">
    <property type="entry name" value="LS/RS"/>
</dbReference>
<dbReference type="InterPro" id="IPR036467">
    <property type="entry name" value="LS/RS_sf"/>
</dbReference>
<dbReference type="NCBIfam" id="TIGR00114">
    <property type="entry name" value="lumazine-synth"/>
    <property type="match status" value="1"/>
</dbReference>
<dbReference type="PANTHER" id="PTHR21058:SF0">
    <property type="entry name" value="6,7-DIMETHYL-8-RIBITYLLUMAZINE SYNTHASE"/>
    <property type="match status" value="1"/>
</dbReference>
<dbReference type="PANTHER" id="PTHR21058">
    <property type="entry name" value="6,7-DIMETHYL-8-RIBITYLLUMAZINE SYNTHASE DMRL SYNTHASE LUMAZINE SYNTHASE"/>
    <property type="match status" value="1"/>
</dbReference>
<dbReference type="Pfam" id="PF00885">
    <property type="entry name" value="DMRL_synthase"/>
    <property type="match status" value="1"/>
</dbReference>
<dbReference type="SUPFAM" id="SSF52121">
    <property type="entry name" value="Lumazine synthase"/>
    <property type="match status" value="1"/>
</dbReference>
<comment type="function">
    <text evidence="1">Catalyzes the formation of 6,7-dimethyl-8-ribityllumazine by condensation of 5-amino-6-(D-ribitylamino)uracil with 3,4-dihydroxy-2-butanone 4-phosphate. This is the penultimate step in the biosynthesis of riboflavin.</text>
</comment>
<comment type="catalytic activity">
    <reaction evidence="1">
        <text>(2S)-2-hydroxy-3-oxobutyl phosphate + 5-amino-6-(D-ribitylamino)uracil = 6,7-dimethyl-8-(1-D-ribityl)lumazine + phosphate + 2 H2O + H(+)</text>
        <dbReference type="Rhea" id="RHEA:26152"/>
        <dbReference type="ChEBI" id="CHEBI:15377"/>
        <dbReference type="ChEBI" id="CHEBI:15378"/>
        <dbReference type="ChEBI" id="CHEBI:15934"/>
        <dbReference type="ChEBI" id="CHEBI:43474"/>
        <dbReference type="ChEBI" id="CHEBI:58201"/>
        <dbReference type="ChEBI" id="CHEBI:58830"/>
        <dbReference type="EC" id="2.5.1.78"/>
    </reaction>
</comment>
<comment type="pathway">
    <text evidence="1">Cofactor biosynthesis; riboflavin biosynthesis; riboflavin from 2-hydroxy-3-oxobutyl phosphate and 5-amino-6-(D-ribitylamino)uracil: step 1/2.</text>
</comment>
<comment type="similarity">
    <text evidence="1">Belongs to the DMRL synthase family.</text>
</comment>
<feature type="chain" id="PRO_1000040379" description="6,7-dimethyl-8-ribityllumazine synthase">
    <location>
        <begin position="1"/>
        <end position="173"/>
    </location>
</feature>
<feature type="region of interest" description="Disordered" evidence="2">
    <location>
        <begin position="150"/>
        <end position="173"/>
    </location>
</feature>
<feature type="compositionally biased region" description="Acidic residues" evidence="2">
    <location>
        <begin position="154"/>
        <end position="173"/>
    </location>
</feature>
<feature type="active site" description="Proton donor" evidence="1">
    <location>
        <position position="90"/>
    </location>
</feature>
<feature type="binding site" evidence="1">
    <location>
        <position position="24"/>
    </location>
    <ligand>
        <name>5-amino-6-(D-ribitylamino)uracil</name>
        <dbReference type="ChEBI" id="CHEBI:15934"/>
    </ligand>
</feature>
<feature type="binding site" evidence="1">
    <location>
        <begin position="58"/>
        <end position="60"/>
    </location>
    <ligand>
        <name>5-amino-6-(D-ribitylamino)uracil</name>
        <dbReference type="ChEBI" id="CHEBI:15934"/>
    </ligand>
</feature>
<feature type="binding site" evidence="1">
    <location>
        <begin position="82"/>
        <end position="84"/>
    </location>
    <ligand>
        <name>5-amino-6-(D-ribitylamino)uracil</name>
        <dbReference type="ChEBI" id="CHEBI:15934"/>
    </ligand>
</feature>
<feature type="binding site" evidence="1">
    <location>
        <begin position="87"/>
        <end position="88"/>
    </location>
    <ligand>
        <name>(2S)-2-hydroxy-3-oxobutyl phosphate</name>
        <dbReference type="ChEBI" id="CHEBI:58830"/>
    </ligand>
</feature>
<feature type="binding site" evidence="1">
    <location>
        <position position="115"/>
    </location>
    <ligand>
        <name>5-amino-6-(D-ribitylamino)uracil</name>
        <dbReference type="ChEBI" id="CHEBI:15934"/>
    </ligand>
</feature>
<feature type="binding site" evidence="1">
    <location>
        <position position="129"/>
    </location>
    <ligand>
        <name>(2S)-2-hydroxy-3-oxobutyl phosphate</name>
        <dbReference type="ChEBI" id="CHEBI:58830"/>
    </ligand>
</feature>
<protein>
    <recommendedName>
        <fullName evidence="1">6,7-dimethyl-8-ribityllumazine synthase</fullName>
        <shortName evidence="1">DMRL synthase</shortName>
        <shortName evidence="1">LS</shortName>
        <shortName evidence="1">Lumazine synthase</shortName>
        <ecNumber evidence="1">2.5.1.78</ecNumber>
    </recommendedName>
</protein>